<evidence type="ECO:0000255" key="1">
    <source>
        <dbReference type="HAMAP-Rule" id="MF_00693"/>
    </source>
</evidence>
<protein>
    <recommendedName>
        <fullName evidence="1">Probable transcriptional regulatory protein Mflv_3828</fullName>
    </recommendedName>
</protein>
<sequence>MSGHSKWATTKHKKAVIDARRGKNFAKLIKNIEVAARTGGGDPGGNPTLYDAIQKAKKNSVPNDNIERARKRGAGEEAGGADWQNITYEGYGPNGVAILVECLTDNKNRAAGEVRVAMTRNGGNMADPGSVAYLFTRKGVVTLDKNGLSEDDVLAAVLDAGAEDVNDLGDSFEIISEPTDLVAVRTALQDAGIEYDSAEASFQPSVSVPVDLDGARKVLKLVDALEDSDDVQDVYTNVDIPDDVAAQLDAD</sequence>
<name>Y3828_MYCGI</name>
<organism>
    <name type="scientific">Mycolicibacterium gilvum (strain PYR-GCK)</name>
    <name type="common">Mycobacterium gilvum (strain PYR-GCK)</name>
    <dbReference type="NCBI Taxonomy" id="350054"/>
    <lineage>
        <taxon>Bacteria</taxon>
        <taxon>Bacillati</taxon>
        <taxon>Actinomycetota</taxon>
        <taxon>Actinomycetes</taxon>
        <taxon>Mycobacteriales</taxon>
        <taxon>Mycobacteriaceae</taxon>
        <taxon>Mycolicibacterium</taxon>
    </lineage>
</organism>
<comment type="subcellular location">
    <subcellularLocation>
        <location evidence="1">Cytoplasm</location>
    </subcellularLocation>
</comment>
<comment type="similarity">
    <text evidence="1">Belongs to the TACO1 family.</text>
</comment>
<reference key="1">
    <citation type="submission" date="2007-04" db="EMBL/GenBank/DDBJ databases">
        <title>Complete sequence of chromosome of Mycobacterium gilvum PYR-GCK.</title>
        <authorList>
            <consortium name="US DOE Joint Genome Institute"/>
            <person name="Copeland A."/>
            <person name="Lucas S."/>
            <person name="Lapidus A."/>
            <person name="Barry K."/>
            <person name="Detter J.C."/>
            <person name="Glavina del Rio T."/>
            <person name="Hammon N."/>
            <person name="Israni S."/>
            <person name="Dalin E."/>
            <person name="Tice H."/>
            <person name="Pitluck S."/>
            <person name="Chain P."/>
            <person name="Malfatti S."/>
            <person name="Shin M."/>
            <person name="Vergez L."/>
            <person name="Schmutz J."/>
            <person name="Larimer F."/>
            <person name="Land M."/>
            <person name="Hauser L."/>
            <person name="Kyrpides N."/>
            <person name="Mikhailova N."/>
            <person name="Miller C."/>
            <person name="Richardson P."/>
        </authorList>
    </citation>
    <scope>NUCLEOTIDE SEQUENCE [LARGE SCALE GENOMIC DNA]</scope>
    <source>
        <strain>PYR-GCK</strain>
    </source>
</reference>
<gene>
    <name type="ordered locus">Mflv_3828</name>
</gene>
<keyword id="KW-0963">Cytoplasm</keyword>
<keyword id="KW-0238">DNA-binding</keyword>
<keyword id="KW-0804">Transcription</keyword>
<keyword id="KW-0805">Transcription regulation</keyword>
<proteinExistence type="inferred from homology"/>
<feature type="chain" id="PRO_1000083161" description="Probable transcriptional regulatory protein Mflv_3828">
    <location>
        <begin position="1"/>
        <end position="251"/>
    </location>
</feature>
<dbReference type="EMBL" id="CP000656">
    <property type="protein sequence ID" value="ABP46300.1"/>
    <property type="molecule type" value="Genomic_DNA"/>
</dbReference>
<dbReference type="SMR" id="A4TD17"/>
<dbReference type="STRING" id="350054.Mflv_3828"/>
<dbReference type="KEGG" id="mgi:Mflv_3828"/>
<dbReference type="eggNOG" id="COG0217">
    <property type="taxonomic scope" value="Bacteria"/>
</dbReference>
<dbReference type="HOGENOM" id="CLU_062974_2_2_11"/>
<dbReference type="OrthoDB" id="9781053at2"/>
<dbReference type="GO" id="GO:0005829">
    <property type="term" value="C:cytosol"/>
    <property type="evidence" value="ECO:0007669"/>
    <property type="project" value="TreeGrafter"/>
</dbReference>
<dbReference type="GO" id="GO:0003677">
    <property type="term" value="F:DNA binding"/>
    <property type="evidence" value="ECO:0007669"/>
    <property type="project" value="UniProtKB-UniRule"/>
</dbReference>
<dbReference type="GO" id="GO:0006355">
    <property type="term" value="P:regulation of DNA-templated transcription"/>
    <property type="evidence" value="ECO:0007669"/>
    <property type="project" value="UniProtKB-UniRule"/>
</dbReference>
<dbReference type="FunFam" id="1.10.10.200:FF:000002">
    <property type="entry name" value="Probable transcriptional regulatory protein CLM62_37755"/>
    <property type="match status" value="1"/>
</dbReference>
<dbReference type="FunFam" id="3.30.70.980:FF:000006">
    <property type="entry name" value="Probable transcriptional regulatory protein J113_18170"/>
    <property type="match status" value="1"/>
</dbReference>
<dbReference type="Gene3D" id="1.10.10.200">
    <property type="match status" value="1"/>
</dbReference>
<dbReference type="Gene3D" id="3.30.70.980">
    <property type="match status" value="2"/>
</dbReference>
<dbReference type="HAMAP" id="MF_00693">
    <property type="entry name" value="Transcrip_reg_TACO1"/>
    <property type="match status" value="1"/>
</dbReference>
<dbReference type="InterPro" id="IPR017856">
    <property type="entry name" value="Integrase-like_N"/>
</dbReference>
<dbReference type="InterPro" id="IPR048300">
    <property type="entry name" value="TACO1_YebC-like_2nd/3rd_dom"/>
</dbReference>
<dbReference type="InterPro" id="IPR049083">
    <property type="entry name" value="TACO1_YebC_N"/>
</dbReference>
<dbReference type="InterPro" id="IPR002876">
    <property type="entry name" value="Transcrip_reg_TACO1-like"/>
</dbReference>
<dbReference type="InterPro" id="IPR026564">
    <property type="entry name" value="Transcrip_reg_TACO1-like_dom3"/>
</dbReference>
<dbReference type="InterPro" id="IPR029072">
    <property type="entry name" value="YebC-like"/>
</dbReference>
<dbReference type="NCBIfam" id="NF001030">
    <property type="entry name" value="PRK00110.1"/>
    <property type="match status" value="1"/>
</dbReference>
<dbReference type="NCBIfam" id="NF009044">
    <property type="entry name" value="PRK12378.1"/>
    <property type="match status" value="1"/>
</dbReference>
<dbReference type="NCBIfam" id="TIGR01033">
    <property type="entry name" value="YebC/PmpR family DNA-binding transcriptional regulator"/>
    <property type="match status" value="1"/>
</dbReference>
<dbReference type="PANTHER" id="PTHR12532:SF6">
    <property type="entry name" value="TRANSCRIPTIONAL REGULATORY PROTEIN YEBC-RELATED"/>
    <property type="match status" value="1"/>
</dbReference>
<dbReference type="PANTHER" id="PTHR12532">
    <property type="entry name" value="TRANSLATIONAL ACTIVATOR OF CYTOCHROME C OXIDASE 1"/>
    <property type="match status" value="1"/>
</dbReference>
<dbReference type="Pfam" id="PF20772">
    <property type="entry name" value="TACO1_YebC_N"/>
    <property type="match status" value="1"/>
</dbReference>
<dbReference type="Pfam" id="PF01709">
    <property type="entry name" value="Transcrip_reg"/>
    <property type="match status" value="1"/>
</dbReference>
<dbReference type="SUPFAM" id="SSF75625">
    <property type="entry name" value="YebC-like"/>
    <property type="match status" value="1"/>
</dbReference>
<accession>A4TD17</accession>